<comment type="subcellular location">
    <subcellularLocation>
        <location evidence="1">Cell inner membrane</location>
        <topology evidence="1">Multi-pass membrane protein</topology>
    </subcellularLocation>
</comment>
<comment type="similarity">
    <text evidence="1">Belongs to the UPF0283 family.</text>
</comment>
<evidence type="ECO:0000255" key="1">
    <source>
        <dbReference type="HAMAP-Rule" id="MF_01085"/>
    </source>
</evidence>
<keyword id="KW-0997">Cell inner membrane</keyword>
<keyword id="KW-1003">Cell membrane</keyword>
<keyword id="KW-0472">Membrane</keyword>
<keyword id="KW-0812">Transmembrane</keyword>
<keyword id="KW-1133">Transmembrane helix</keyword>
<reference key="1">
    <citation type="journal article" date="2009" name="PLoS Genet.">
        <title>Organised genome dynamics in the Escherichia coli species results in highly diverse adaptive paths.</title>
        <authorList>
            <person name="Touchon M."/>
            <person name="Hoede C."/>
            <person name="Tenaillon O."/>
            <person name="Barbe V."/>
            <person name="Baeriswyl S."/>
            <person name="Bidet P."/>
            <person name="Bingen E."/>
            <person name="Bonacorsi S."/>
            <person name="Bouchier C."/>
            <person name="Bouvet O."/>
            <person name="Calteau A."/>
            <person name="Chiapello H."/>
            <person name="Clermont O."/>
            <person name="Cruveiller S."/>
            <person name="Danchin A."/>
            <person name="Diard M."/>
            <person name="Dossat C."/>
            <person name="Karoui M.E."/>
            <person name="Frapy E."/>
            <person name="Garry L."/>
            <person name="Ghigo J.M."/>
            <person name="Gilles A.M."/>
            <person name="Johnson J."/>
            <person name="Le Bouguenec C."/>
            <person name="Lescat M."/>
            <person name="Mangenot S."/>
            <person name="Martinez-Jehanne V."/>
            <person name="Matic I."/>
            <person name="Nassif X."/>
            <person name="Oztas S."/>
            <person name="Petit M.A."/>
            <person name="Pichon C."/>
            <person name="Rouy Z."/>
            <person name="Ruf C.S."/>
            <person name="Schneider D."/>
            <person name="Tourret J."/>
            <person name="Vacherie B."/>
            <person name="Vallenet D."/>
            <person name="Medigue C."/>
            <person name="Rocha E.P.C."/>
            <person name="Denamur E."/>
        </authorList>
    </citation>
    <scope>NUCLEOTIDE SEQUENCE [LARGE SCALE GENOMIC DNA]</scope>
    <source>
        <strain>ATCC 35469 / DSM 13698 / BCRC 15582 / CCUG 18766 / IAM 14443 / JCM 21226 / LMG 7866 / NBRC 102419 / NCTC 12128 / CDC 0568-73</strain>
    </source>
</reference>
<feature type="chain" id="PRO_1000136889" description="UPF0283 membrane protein YcjF">
    <location>
        <begin position="1"/>
        <end position="353"/>
    </location>
</feature>
<feature type="transmembrane region" description="Helical" evidence="1">
    <location>
        <begin position="70"/>
        <end position="90"/>
    </location>
</feature>
<feature type="transmembrane region" description="Helical" evidence="1">
    <location>
        <begin position="100"/>
        <end position="120"/>
    </location>
</feature>
<feature type="transmembrane region" description="Helical" evidence="1">
    <location>
        <begin position="213"/>
        <end position="233"/>
    </location>
</feature>
<name>YCJF_ESCF3</name>
<dbReference type="EMBL" id="CU928158">
    <property type="protein sequence ID" value="CAQ89168.1"/>
    <property type="molecule type" value="Genomic_DNA"/>
</dbReference>
<dbReference type="RefSeq" id="WP_000138740.1">
    <property type="nucleotide sequence ID" value="NC_011740.1"/>
</dbReference>
<dbReference type="SMR" id="B7LRX6"/>
<dbReference type="KEGG" id="efe:EFER_1652"/>
<dbReference type="HOGENOM" id="CLU_057693_2_0_6"/>
<dbReference type="OrthoDB" id="958025at2"/>
<dbReference type="Proteomes" id="UP000000745">
    <property type="component" value="Chromosome"/>
</dbReference>
<dbReference type="GO" id="GO:0005886">
    <property type="term" value="C:plasma membrane"/>
    <property type="evidence" value="ECO:0007669"/>
    <property type="project" value="UniProtKB-SubCell"/>
</dbReference>
<dbReference type="HAMAP" id="MF_01085">
    <property type="entry name" value="UPF0283"/>
    <property type="match status" value="1"/>
</dbReference>
<dbReference type="InterPro" id="IPR021147">
    <property type="entry name" value="DUF697"/>
</dbReference>
<dbReference type="InterPro" id="IPR006507">
    <property type="entry name" value="UPF0283"/>
</dbReference>
<dbReference type="NCBIfam" id="TIGR01620">
    <property type="entry name" value="hyp_HI0043"/>
    <property type="match status" value="1"/>
</dbReference>
<dbReference type="PANTHER" id="PTHR39342">
    <property type="entry name" value="UPF0283 MEMBRANE PROTEIN YCJF"/>
    <property type="match status" value="1"/>
</dbReference>
<dbReference type="PANTHER" id="PTHR39342:SF1">
    <property type="entry name" value="UPF0283 MEMBRANE PROTEIN YCJF"/>
    <property type="match status" value="1"/>
</dbReference>
<dbReference type="Pfam" id="PF05128">
    <property type="entry name" value="DUF697"/>
    <property type="match status" value="1"/>
</dbReference>
<gene>
    <name evidence="1" type="primary">ycjF</name>
    <name type="ordered locus">EFER_1652</name>
</gene>
<accession>B7LRX6</accession>
<proteinExistence type="inferred from homology"/>
<organism>
    <name type="scientific">Escherichia fergusonii (strain ATCC 35469 / DSM 13698 / CCUG 18766 / IAM 14443 / JCM 21226 / LMG 7866 / NBRC 102419 / NCTC 12128 / CDC 0568-73)</name>
    <dbReference type="NCBI Taxonomy" id="585054"/>
    <lineage>
        <taxon>Bacteria</taxon>
        <taxon>Pseudomonadati</taxon>
        <taxon>Pseudomonadota</taxon>
        <taxon>Gammaproteobacteria</taxon>
        <taxon>Enterobacterales</taxon>
        <taxon>Enterobacteriaceae</taxon>
        <taxon>Escherichia</taxon>
    </lineage>
</organism>
<sequence>MTEPLKPRIDFDGPLEVDQSPKFKAQQTFDENQAQNFAPATLDEAPEEEGQVEAVMDAALRPKRSLWRKMVMGGLALFGASVVGQGVQWTMNAWQTQDWVALGGCAAGALIIGAGVGSVVTEWRRLWRLRQRAHERDEARDLLHSHGAGKGRAFCEKLAQQAGIDQSHPALQRWYASIHETQNDREVVTLYAHLVQPVLDAQARREISRSAAESTLMIAVSPLALVDMAFIAWRNLRLINRIATLYGIELGYYSRLRLFRLVLLNIAFAGASELVREVGMDWMSQDLAARLSTRAAQGIGAGLLTARLGIKAMELCRPLPWLDDDKPRLGDFRRQLIGQLKETLQKAPTRREN</sequence>
<protein>
    <recommendedName>
        <fullName evidence="1">UPF0283 membrane protein YcjF</fullName>
    </recommendedName>
</protein>